<dbReference type="EC" id="2.1.3.3" evidence="2"/>
<dbReference type="EMBL" id="CP000678">
    <property type="protein sequence ID" value="ABQ87431.1"/>
    <property type="molecule type" value="Genomic_DNA"/>
</dbReference>
<dbReference type="RefSeq" id="WP_004032705.1">
    <property type="nucleotide sequence ID" value="NZ_CP117965.1"/>
</dbReference>
<dbReference type="SMR" id="A5UMK3"/>
<dbReference type="STRING" id="420247.Msm_1226"/>
<dbReference type="EnsemblBacteria" id="ABQ87431">
    <property type="protein sequence ID" value="ABQ87431"/>
    <property type="gene ID" value="Msm_1226"/>
</dbReference>
<dbReference type="GeneID" id="78817879"/>
<dbReference type="KEGG" id="msi:Msm_1226"/>
<dbReference type="PATRIC" id="fig|420247.28.peg.1225"/>
<dbReference type="eggNOG" id="arCOG00912">
    <property type="taxonomic scope" value="Archaea"/>
</dbReference>
<dbReference type="HOGENOM" id="CLU_043846_3_2_2"/>
<dbReference type="UniPathway" id="UPA00068">
    <property type="reaction ID" value="UER00112"/>
</dbReference>
<dbReference type="Proteomes" id="UP000001992">
    <property type="component" value="Chromosome"/>
</dbReference>
<dbReference type="GO" id="GO:0005737">
    <property type="term" value="C:cytoplasm"/>
    <property type="evidence" value="ECO:0007669"/>
    <property type="project" value="UniProtKB-SubCell"/>
</dbReference>
<dbReference type="GO" id="GO:0016597">
    <property type="term" value="F:amino acid binding"/>
    <property type="evidence" value="ECO:0007669"/>
    <property type="project" value="InterPro"/>
</dbReference>
<dbReference type="GO" id="GO:0004585">
    <property type="term" value="F:ornithine carbamoyltransferase activity"/>
    <property type="evidence" value="ECO:0007669"/>
    <property type="project" value="UniProtKB-UniRule"/>
</dbReference>
<dbReference type="GO" id="GO:0042450">
    <property type="term" value="P:arginine biosynthetic process via ornithine"/>
    <property type="evidence" value="ECO:0007669"/>
    <property type="project" value="TreeGrafter"/>
</dbReference>
<dbReference type="GO" id="GO:0019240">
    <property type="term" value="P:citrulline biosynthetic process"/>
    <property type="evidence" value="ECO:0007669"/>
    <property type="project" value="TreeGrafter"/>
</dbReference>
<dbReference type="GO" id="GO:0006526">
    <property type="term" value="P:L-arginine biosynthetic process"/>
    <property type="evidence" value="ECO:0007669"/>
    <property type="project" value="UniProtKB-UniRule"/>
</dbReference>
<dbReference type="FunFam" id="3.40.50.1370:FF:000008">
    <property type="entry name" value="Ornithine carbamoyltransferase"/>
    <property type="match status" value="1"/>
</dbReference>
<dbReference type="Gene3D" id="3.40.50.1370">
    <property type="entry name" value="Aspartate/ornithine carbamoyltransferase"/>
    <property type="match status" value="2"/>
</dbReference>
<dbReference type="HAMAP" id="MF_01109">
    <property type="entry name" value="OTCase"/>
    <property type="match status" value="1"/>
</dbReference>
<dbReference type="InterPro" id="IPR006132">
    <property type="entry name" value="Asp/Orn_carbamoyltranf_P-bd"/>
</dbReference>
<dbReference type="InterPro" id="IPR006130">
    <property type="entry name" value="Asp/Orn_carbamoylTrfase"/>
</dbReference>
<dbReference type="InterPro" id="IPR036901">
    <property type="entry name" value="Asp/Orn_carbamoylTrfase_sf"/>
</dbReference>
<dbReference type="InterPro" id="IPR006131">
    <property type="entry name" value="Asp_carbamoyltransf_Asp/Orn-bd"/>
</dbReference>
<dbReference type="InterPro" id="IPR002292">
    <property type="entry name" value="Orn/put_carbamltrans"/>
</dbReference>
<dbReference type="InterPro" id="IPR024904">
    <property type="entry name" value="OTCase_ArgI"/>
</dbReference>
<dbReference type="NCBIfam" id="TIGR00658">
    <property type="entry name" value="orni_carb_tr"/>
    <property type="match status" value="1"/>
</dbReference>
<dbReference type="NCBIfam" id="NF001986">
    <property type="entry name" value="PRK00779.1"/>
    <property type="match status" value="1"/>
</dbReference>
<dbReference type="PANTHER" id="PTHR45753">
    <property type="entry name" value="ORNITHINE CARBAMOYLTRANSFERASE, MITOCHONDRIAL"/>
    <property type="match status" value="1"/>
</dbReference>
<dbReference type="PANTHER" id="PTHR45753:SF3">
    <property type="entry name" value="ORNITHINE TRANSCARBAMYLASE, MITOCHONDRIAL"/>
    <property type="match status" value="1"/>
</dbReference>
<dbReference type="Pfam" id="PF00185">
    <property type="entry name" value="OTCace"/>
    <property type="match status" value="1"/>
</dbReference>
<dbReference type="Pfam" id="PF02729">
    <property type="entry name" value="OTCace_N"/>
    <property type="match status" value="1"/>
</dbReference>
<dbReference type="PRINTS" id="PR00100">
    <property type="entry name" value="AOTCASE"/>
</dbReference>
<dbReference type="PRINTS" id="PR00102">
    <property type="entry name" value="OTCASE"/>
</dbReference>
<dbReference type="SUPFAM" id="SSF53671">
    <property type="entry name" value="Aspartate/ornithine carbamoyltransferase"/>
    <property type="match status" value="1"/>
</dbReference>
<dbReference type="PROSITE" id="PS00097">
    <property type="entry name" value="CARBAMOYLTRANSFERASE"/>
    <property type="match status" value="1"/>
</dbReference>
<name>OTC_METS3</name>
<proteinExistence type="inferred from homology"/>
<evidence type="ECO:0000250" key="1"/>
<evidence type="ECO:0000255" key="2">
    <source>
        <dbReference type="HAMAP-Rule" id="MF_01109"/>
    </source>
</evidence>
<feature type="chain" id="PRO_1000065100" description="Ornithine carbamoyltransferase">
    <location>
        <begin position="1"/>
        <end position="301"/>
    </location>
</feature>
<feature type="binding site" evidence="2">
    <location>
        <begin position="47"/>
        <end position="50"/>
    </location>
    <ligand>
        <name>carbamoyl phosphate</name>
        <dbReference type="ChEBI" id="CHEBI:58228"/>
    </ligand>
</feature>
<feature type="binding site" evidence="2">
    <location>
        <position position="74"/>
    </location>
    <ligand>
        <name>carbamoyl phosphate</name>
        <dbReference type="ChEBI" id="CHEBI:58228"/>
    </ligand>
</feature>
<feature type="binding site" evidence="2">
    <location>
        <position position="98"/>
    </location>
    <ligand>
        <name>carbamoyl phosphate</name>
        <dbReference type="ChEBI" id="CHEBI:58228"/>
    </ligand>
</feature>
<feature type="binding site" evidence="2">
    <location>
        <begin position="125"/>
        <end position="128"/>
    </location>
    <ligand>
        <name>carbamoyl phosphate</name>
        <dbReference type="ChEBI" id="CHEBI:58228"/>
    </ligand>
</feature>
<feature type="binding site" evidence="2">
    <location>
        <position position="156"/>
    </location>
    <ligand>
        <name>L-ornithine</name>
        <dbReference type="ChEBI" id="CHEBI:46911"/>
    </ligand>
</feature>
<feature type="binding site" evidence="2">
    <location>
        <position position="220"/>
    </location>
    <ligand>
        <name>L-ornithine</name>
        <dbReference type="ChEBI" id="CHEBI:46911"/>
    </ligand>
</feature>
<feature type="binding site" evidence="2">
    <location>
        <begin position="224"/>
        <end position="225"/>
    </location>
    <ligand>
        <name>L-ornithine</name>
        <dbReference type="ChEBI" id="CHEBI:46911"/>
    </ligand>
</feature>
<feature type="binding site" evidence="2">
    <location>
        <begin position="260"/>
        <end position="261"/>
    </location>
    <ligand>
        <name>carbamoyl phosphate</name>
        <dbReference type="ChEBI" id="CHEBI:58228"/>
    </ligand>
</feature>
<feature type="binding site" evidence="2">
    <location>
        <position position="288"/>
    </location>
    <ligand>
        <name>carbamoyl phosphate</name>
        <dbReference type="ChEBI" id="CHEBI:58228"/>
    </ligand>
</feature>
<reference key="1">
    <citation type="journal article" date="2007" name="Proc. Natl. Acad. Sci. U.S.A.">
        <title>Genomic and metabolic adaptations of Methanobrevibacter smithii to the human gut.</title>
        <authorList>
            <person name="Samuel B.S."/>
            <person name="Hansen E.E."/>
            <person name="Manchester J.K."/>
            <person name="Coutinho P.M."/>
            <person name="Henrissat B."/>
            <person name="Fulton R."/>
            <person name="Latreille P."/>
            <person name="Kim K."/>
            <person name="Wilson R.K."/>
            <person name="Gordon J.I."/>
        </authorList>
    </citation>
    <scope>NUCLEOTIDE SEQUENCE [LARGE SCALE GENOMIC DNA]</scope>
    <source>
        <strain>ATCC 35061 / DSM 861 / OCM 144 / PS</strain>
    </source>
</reference>
<keyword id="KW-0028">Amino-acid biosynthesis</keyword>
<keyword id="KW-0055">Arginine biosynthesis</keyword>
<keyword id="KW-0963">Cytoplasm</keyword>
<keyword id="KW-0808">Transferase</keyword>
<comment type="function">
    <text evidence="1">Reversibly catalyzes the transfer of the carbamoyl group from carbamoyl phosphate (CP) to the N(epsilon) atom of ornithine (ORN) to produce L-citrulline.</text>
</comment>
<comment type="catalytic activity">
    <reaction evidence="2">
        <text>carbamoyl phosphate + L-ornithine = L-citrulline + phosphate + H(+)</text>
        <dbReference type="Rhea" id="RHEA:19513"/>
        <dbReference type="ChEBI" id="CHEBI:15378"/>
        <dbReference type="ChEBI" id="CHEBI:43474"/>
        <dbReference type="ChEBI" id="CHEBI:46911"/>
        <dbReference type="ChEBI" id="CHEBI:57743"/>
        <dbReference type="ChEBI" id="CHEBI:58228"/>
        <dbReference type="EC" id="2.1.3.3"/>
    </reaction>
</comment>
<comment type="pathway">
    <text evidence="2">Amino-acid biosynthesis; L-arginine biosynthesis; L-arginine from L-ornithine and carbamoyl phosphate: step 1/3.</text>
</comment>
<comment type="subcellular location">
    <subcellularLocation>
        <location evidence="2">Cytoplasm</location>
    </subcellularLocation>
</comment>
<comment type="similarity">
    <text evidence="2">Belongs to the aspartate/ornithine carbamoyltransferase superfamily. OTCase family.</text>
</comment>
<organism>
    <name type="scientific">Methanobrevibacter smithii (strain ATCC 35061 / DSM 861 / OCM 144 / PS)</name>
    <dbReference type="NCBI Taxonomy" id="420247"/>
    <lineage>
        <taxon>Archaea</taxon>
        <taxon>Methanobacteriati</taxon>
        <taxon>Methanobacteriota</taxon>
        <taxon>Methanomada group</taxon>
        <taxon>Methanobacteria</taxon>
        <taxon>Methanobacteriales</taxon>
        <taxon>Methanobacteriaceae</taxon>
        <taxon>Methanobrevibacter</taxon>
    </lineage>
</organism>
<accession>A5UMK3</accession>
<gene>
    <name evidence="2" type="primary">argF</name>
    <name type="ordered locus">Msm_1226</name>
</gene>
<sequence length="301" mass="33196">MSNLLSVCDIKDEVLDILELAKNFKEGKMEEKPLAGKSLAMIFQKSSTRTRVSFDVGMYQLGGQALFLSSSELQMGRGEPIPDTAKVLSRFVDGIMIRAIEHDDVVELAKYSDVPVISGLTNLEHPCQALADMLTIQEHLGKLEGKKLCFVGDGNNVCNSLLLMAPLVGMDMSVACPEGYEPNEDIVNMAKKLAEEHNKEITISSDLKVALDNVDVVYTDVWVSMGDEKEAEQRQKDFAPYQVNSNLMSLANDGAIFMHCLPAIRGQEVSGEVIDGPQSVVFDEAENRLHAQKAVLYHFLK</sequence>
<protein>
    <recommendedName>
        <fullName evidence="2">Ornithine carbamoyltransferase</fullName>
        <shortName evidence="2">OTCase</shortName>
        <ecNumber evidence="2">2.1.3.3</ecNumber>
    </recommendedName>
</protein>